<gene>
    <name evidence="1" type="primary">kdsA</name>
    <name type="ordered locus">BMA1690</name>
</gene>
<accession>Q62J09</accession>
<sequence length="284" mass="30570">MNLAGFEVGLDKPFFLIAGTCVVESEQMTIDTAGRLKEICATLGVPFIYKSSYDKANRSSGKSFRGLGMDEGLRILAEVKRQLNVPVLTDVHEIDEIAPVAAVVDVLQTPAFLCRQTDFIRACAQSGKPVNIKKGQFLAPHDMKNVIDKARDAARDAGLSEDRFMACERGVSFGYNNLVSDMRSLAIMRETGAPVVFDATHSVQLPGGQGTSSGGQREFVPVLARAALATGVAGLFMETHPNPAEAKSDGPNAVPLGRMAALLETLVTLDRAVKRVPFLENDFN</sequence>
<feature type="chain" id="PRO_0000187109" description="2-dehydro-3-deoxyphosphooctonate aldolase">
    <location>
        <begin position="1"/>
        <end position="284"/>
    </location>
</feature>
<name>KDSA_BURMA</name>
<evidence type="ECO:0000255" key="1">
    <source>
        <dbReference type="HAMAP-Rule" id="MF_00056"/>
    </source>
</evidence>
<proteinExistence type="inferred from homology"/>
<keyword id="KW-0963">Cytoplasm</keyword>
<keyword id="KW-0448">Lipopolysaccharide biosynthesis</keyword>
<keyword id="KW-1185">Reference proteome</keyword>
<keyword id="KW-0808">Transferase</keyword>
<organism>
    <name type="scientific">Burkholderia mallei (strain ATCC 23344)</name>
    <dbReference type="NCBI Taxonomy" id="243160"/>
    <lineage>
        <taxon>Bacteria</taxon>
        <taxon>Pseudomonadati</taxon>
        <taxon>Pseudomonadota</taxon>
        <taxon>Betaproteobacteria</taxon>
        <taxon>Burkholderiales</taxon>
        <taxon>Burkholderiaceae</taxon>
        <taxon>Burkholderia</taxon>
        <taxon>pseudomallei group</taxon>
    </lineage>
</organism>
<protein>
    <recommendedName>
        <fullName evidence="1">2-dehydro-3-deoxyphosphooctonate aldolase</fullName>
        <ecNumber evidence="1">2.5.1.55</ecNumber>
    </recommendedName>
    <alternativeName>
        <fullName evidence="1">3-deoxy-D-manno-octulosonic acid 8-phosphate synthase</fullName>
    </alternativeName>
    <alternativeName>
        <fullName evidence="1">KDO-8-phosphate synthase</fullName>
        <shortName evidence="1">KDO 8-P synthase</shortName>
        <shortName evidence="1">KDOPS</shortName>
    </alternativeName>
    <alternativeName>
        <fullName evidence="1">Phospho-2-dehydro-3-deoxyoctonate aldolase</fullName>
    </alternativeName>
</protein>
<dbReference type="EC" id="2.5.1.55" evidence="1"/>
<dbReference type="EMBL" id="CP000010">
    <property type="protein sequence ID" value="AAU47801.1"/>
    <property type="molecule type" value="Genomic_DNA"/>
</dbReference>
<dbReference type="RefSeq" id="WP_004193658.1">
    <property type="nucleotide sequence ID" value="NC_006348.1"/>
</dbReference>
<dbReference type="RefSeq" id="YP_103310.1">
    <property type="nucleotide sequence ID" value="NC_006348.1"/>
</dbReference>
<dbReference type="SMR" id="Q62J09"/>
<dbReference type="GeneID" id="93060828"/>
<dbReference type="KEGG" id="bma:BMA1690"/>
<dbReference type="PATRIC" id="fig|243160.12.peg.1728"/>
<dbReference type="eggNOG" id="COG2877">
    <property type="taxonomic scope" value="Bacteria"/>
</dbReference>
<dbReference type="HOGENOM" id="CLU_036666_0_0_4"/>
<dbReference type="UniPathway" id="UPA00030"/>
<dbReference type="UniPathway" id="UPA00357">
    <property type="reaction ID" value="UER00474"/>
</dbReference>
<dbReference type="Proteomes" id="UP000006693">
    <property type="component" value="Chromosome 1"/>
</dbReference>
<dbReference type="GO" id="GO:0005737">
    <property type="term" value="C:cytoplasm"/>
    <property type="evidence" value="ECO:0007669"/>
    <property type="project" value="UniProtKB-SubCell"/>
</dbReference>
<dbReference type="GO" id="GO:0008676">
    <property type="term" value="F:3-deoxy-8-phosphooctulonate synthase activity"/>
    <property type="evidence" value="ECO:0007669"/>
    <property type="project" value="UniProtKB-UniRule"/>
</dbReference>
<dbReference type="GO" id="GO:0019294">
    <property type="term" value="P:keto-3-deoxy-D-manno-octulosonic acid biosynthetic process"/>
    <property type="evidence" value="ECO:0007669"/>
    <property type="project" value="UniProtKB-UniRule"/>
</dbReference>
<dbReference type="Gene3D" id="3.20.20.70">
    <property type="entry name" value="Aldolase class I"/>
    <property type="match status" value="1"/>
</dbReference>
<dbReference type="HAMAP" id="MF_00056">
    <property type="entry name" value="KDO8P_synth"/>
    <property type="match status" value="1"/>
</dbReference>
<dbReference type="InterPro" id="IPR013785">
    <property type="entry name" value="Aldolase_TIM"/>
</dbReference>
<dbReference type="InterPro" id="IPR006218">
    <property type="entry name" value="DAHP1/KDSA"/>
</dbReference>
<dbReference type="InterPro" id="IPR006269">
    <property type="entry name" value="KDO8P_synthase"/>
</dbReference>
<dbReference type="NCBIfam" id="TIGR01362">
    <property type="entry name" value="KDO8P_synth"/>
    <property type="match status" value="1"/>
</dbReference>
<dbReference type="NCBIfam" id="NF003543">
    <property type="entry name" value="PRK05198.1"/>
    <property type="match status" value="1"/>
</dbReference>
<dbReference type="PANTHER" id="PTHR21057">
    <property type="entry name" value="PHOSPHO-2-DEHYDRO-3-DEOXYHEPTONATE ALDOLASE"/>
    <property type="match status" value="1"/>
</dbReference>
<dbReference type="Pfam" id="PF00793">
    <property type="entry name" value="DAHP_synth_1"/>
    <property type="match status" value="1"/>
</dbReference>
<dbReference type="SUPFAM" id="SSF51569">
    <property type="entry name" value="Aldolase"/>
    <property type="match status" value="1"/>
</dbReference>
<comment type="catalytic activity">
    <reaction evidence="1">
        <text>D-arabinose 5-phosphate + phosphoenolpyruvate + H2O = 3-deoxy-alpha-D-manno-2-octulosonate-8-phosphate + phosphate</text>
        <dbReference type="Rhea" id="RHEA:14053"/>
        <dbReference type="ChEBI" id="CHEBI:15377"/>
        <dbReference type="ChEBI" id="CHEBI:43474"/>
        <dbReference type="ChEBI" id="CHEBI:57693"/>
        <dbReference type="ChEBI" id="CHEBI:58702"/>
        <dbReference type="ChEBI" id="CHEBI:85985"/>
        <dbReference type="EC" id="2.5.1.55"/>
    </reaction>
</comment>
<comment type="pathway">
    <text evidence="1">Carbohydrate biosynthesis; 3-deoxy-D-manno-octulosonate biosynthesis; 3-deoxy-D-manno-octulosonate from D-ribulose 5-phosphate: step 2/3.</text>
</comment>
<comment type="pathway">
    <text evidence="1">Bacterial outer membrane biogenesis; lipopolysaccharide biosynthesis.</text>
</comment>
<comment type="subcellular location">
    <subcellularLocation>
        <location evidence="1">Cytoplasm</location>
    </subcellularLocation>
</comment>
<comment type="similarity">
    <text evidence="1">Belongs to the KdsA family.</text>
</comment>
<reference key="1">
    <citation type="journal article" date="2004" name="Proc. Natl. Acad. Sci. U.S.A.">
        <title>Structural flexibility in the Burkholderia mallei genome.</title>
        <authorList>
            <person name="Nierman W.C."/>
            <person name="DeShazer D."/>
            <person name="Kim H.S."/>
            <person name="Tettelin H."/>
            <person name="Nelson K.E."/>
            <person name="Feldblyum T.V."/>
            <person name="Ulrich R.L."/>
            <person name="Ronning C.M."/>
            <person name="Brinkac L.M."/>
            <person name="Daugherty S.C."/>
            <person name="Davidsen T.D."/>
            <person name="DeBoy R.T."/>
            <person name="Dimitrov G."/>
            <person name="Dodson R.J."/>
            <person name="Durkin A.S."/>
            <person name="Gwinn M.L."/>
            <person name="Haft D.H."/>
            <person name="Khouri H.M."/>
            <person name="Kolonay J.F."/>
            <person name="Madupu R."/>
            <person name="Mohammoud Y."/>
            <person name="Nelson W.C."/>
            <person name="Radune D."/>
            <person name="Romero C.M."/>
            <person name="Sarria S."/>
            <person name="Selengut J."/>
            <person name="Shamblin C."/>
            <person name="Sullivan S.A."/>
            <person name="White O."/>
            <person name="Yu Y."/>
            <person name="Zafar N."/>
            <person name="Zhou L."/>
            <person name="Fraser C.M."/>
        </authorList>
    </citation>
    <scope>NUCLEOTIDE SEQUENCE [LARGE SCALE GENOMIC DNA]</scope>
    <source>
        <strain>ATCC 23344</strain>
    </source>
</reference>